<name>KR111_HUMAN</name>
<sequence length="163" mass="17085">MSFNCSTRNCSSRPIGGRCIVPVAQVTTTSTTDADCLGGICLPSSFQTGSWLLDHCQETCCEPTACQPTCYRRTSCVSNPCQVTCSRQTTCISNPCSTTYSRPLTFVSSGCQPLGGISSVCQPVGGISTVCQPVGGVSTVCQPACGVSRTYQQSCVSSCRRTC</sequence>
<keyword id="KW-0416">Keratin</keyword>
<keyword id="KW-1267">Proteomics identification</keyword>
<keyword id="KW-1185">Reference proteome</keyword>
<keyword id="KW-0677">Repeat</keyword>
<feature type="chain" id="PRO_0000185194" description="Keratin-associated protein 11-1">
    <location>
        <begin position="1"/>
        <end position="163"/>
    </location>
</feature>
<feature type="repeat" description="1">
    <location>
        <begin position="111"/>
        <end position="120"/>
    </location>
</feature>
<feature type="repeat" description="2">
    <location>
        <begin position="121"/>
        <end position="130"/>
    </location>
</feature>
<feature type="repeat" description="3">
    <location>
        <begin position="131"/>
        <end position="140"/>
    </location>
</feature>
<feature type="repeat" description="4">
    <location>
        <begin position="141"/>
        <end position="150"/>
    </location>
</feature>
<feature type="region of interest" description="4 X 10 AA approximate repeats">
    <location>
        <begin position="111"/>
        <end position="150"/>
    </location>
</feature>
<feature type="sequence variant" id="VAR_053467" description="In dbSNP:rs9636845.">
    <original>C</original>
    <variation>S</variation>
    <location>
        <position position="111"/>
    </location>
</feature>
<accession>Q8IUC1</accession>
<accession>A1L4I8</accession>
<proteinExistence type="evidence at protein level"/>
<reference key="1">
    <citation type="journal article" date="2002" name="J. Biol. Chem.">
        <title>Characterization of a first domain of human high glycine-tyrosine and high sulfur keratin-associated protein (KAP) genes on chromosome 21q22.1.</title>
        <authorList>
            <person name="Rogers M.A."/>
            <person name="Langbein L."/>
            <person name="Winter H."/>
            <person name="Ehmann C."/>
            <person name="Praetzel S."/>
            <person name="Schweizer J."/>
        </authorList>
    </citation>
    <scope>NUCLEOTIDE SEQUENCE [MRNA]</scope>
    <source>
        <tissue>Scalp</tissue>
    </source>
</reference>
<reference key="2">
    <citation type="journal article" date="2000" name="Nature">
        <title>The DNA sequence of human chromosome 21.</title>
        <authorList>
            <person name="Hattori M."/>
            <person name="Fujiyama A."/>
            <person name="Taylor T.D."/>
            <person name="Watanabe H."/>
            <person name="Yada T."/>
            <person name="Park H.-S."/>
            <person name="Toyoda A."/>
            <person name="Ishii K."/>
            <person name="Totoki Y."/>
            <person name="Choi D.-K."/>
            <person name="Groner Y."/>
            <person name="Soeda E."/>
            <person name="Ohki M."/>
            <person name="Takagi T."/>
            <person name="Sakaki Y."/>
            <person name="Taudien S."/>
            <person name="Blechschmidt K."/>
            <person name="Polley A."/>
            <person name="Menzel U."/>
            <person name="Delabar J."/>
            <person name="Kumpf K."/>
            <person name="Lehmann R."/>
            <person name="Patterson D."/>
            <person name="Reichwald K."/>
            <person name="Rump A."/>
            <person name="Schillhabel M."/>
            <person name="Schudy A."/>
            <person name="Zimmermann W."/>
            <person name="Rosenthal A."/>
            <person name="Kudoh J."/>
            <person name="Shibuya K."/>
            <person name="Kawasaki K."/>
            <person name="Asakawa S."/>
            <person name="Shintani A."/>
            <person name="Sasaki T."/>
            <person name="Nagamine K."/>
            <person name="Mitsuyama S."/>
            <person name="Antonarakis S.E."/>
            <person name="Minoshima S."/>
            <person name="Shimizu N."/>
            <person name="Nordsiek G."/>
            <person name="Hornischer K."/>
            <person name="Brandt P."/>
            <person name="Scharfe M."/>
            <person name="Schoen O."/>
            <person name="Desario A."/>
            <person name="Reichelt J."/>
            <person name="Kauer G."/>
            <person name="Bloecker H."/>
            <person name="Ramser J."/>
            <person name="Beck A."/>
            <person name="Klages S."/>
            <person name="Hennig S."/>
            <person name="Riesselmann L."/>
            <person name="Dagand E."/>
            <person name="Wehrmeyer S."/>
            <person name="Borzym K."/>
            <person name="Gardiner K."/>
            <person name="Nizetic D."/>
            <person name="Francis F."/>
            <person name="Lehrach H."/>
            <person name="Reinhardt R."/>
            <person name="Yaspo M.-L."/>
        </authorList>
    </citation>
    <scope>NUCLEOTIDE SEQUENCE [LARGE SCALE GENOMIC DNA]</scope>
</reference>
<reference key="3">
    <citation type="journal article" date="2004" name="Genome Res.">
        <title>The status, quality, and expansion of the NIH full-length cDNA project: the Mammalian Gene Collection (MGC).</title>
        <authorList>
            <consortium name="The MGC Project Team"/>
        </authorList>
    </citation>
    <scope>NUCLEOTIDE SEQUENCE [LARGE SCALE MRNA]</scope>
</reference>
<dbReference type="EMBL" id="AJ457065">
    <property type="protein sequence ID" value="CAD29721.1"/>
    <property type="molecule type" value="mRNA"/>
</dbReference>
<dbReference type="EMBL" id="AP000244">
    <property type="status" value="NOT_ANNOTATED_CDS"/>
    <property type="molecule type" value="Genomic_DNA"/>
</dbReference>
<dbReference type="EMBL" id="BC130555">
    <property type="protein sequence ID" value="AAI30556.1"/>
    <property type="molecule type" value="mRNA"/>
</dbReference>
<dbReference type="EMBL" id="BC130557">
    <property type="protein sequence ID" value="AAI30558.1"/>
    <property type="molecule type" value="mRNA"/>
</dbReference>
<dbReference type="CCDS" id="CCDS13608.1"/>
<dbReference type="RefSeq" id="NP_787054.1">
    <property type="nucleotide sequence ID" value="NM_175858.3"/>
</dbReference>
<dbReference type="BioGRID" id="130626">
    <property type="interactions" value="108"/>
</dbReference>
<dbReference type="FunCoup" id="Q8IUC1">
    <property type="interactions" value="36"/>
</dbReference>
<dbReference type="IntAct" id="Q8IUC1">
    <property type="interactions" value="105"/>
</dbReference>
<dbReference type="STRING" id="9606.ENSP00000330720"/>
<dbReference type="SwissPalm" id="Q8IUC1"/>
<dbReference type="BioMuta" id="KRTAP11-1"/>
<dbReference type="DMDM" id="32363182"/>
<dbReference type="MassIVE" id="Q8IUC1"/>
<dbReference type="PaxDb" id="9606-ENSP00000330720"/>
<dbReference type="PeptideAtlas" id="Q8IUC1"/>
<dbReference type="ProteomicsDB" id="70540"/>
<dbReference type="Antibodypedia" id="22495">
    <property type="antibodies" value="69 antibodies from 21 providers"/>
</dbReference>
<dbReference type="DNASU" id="337880"/>
<dbReference type="Ensembl" id="ENST00000332378.6">
    <property type="protein sequence ID" value="ENSP00000330720.4"/>
    <property type="gene ID" value="ENSG00000182591.6"/>
</dbReference>
<dbReference type="GeneID" id="337880"/>
<dbReference type="KEGG" id="hsa:337880"/>
<dbReference type="MANE-Select" id="ENST00000332378.6">
    <property type="protein sequence ID" value="ENSP00000330720.4"/>
    <property type="RefSeq nucleotide sequence ID" value="NM_175858.3"/>
    <property type="RefSeq protein sequence ID" value="NP_787054.1"/>
</dbReference>
<dbReference type="UCSC" id="uc002yov.4">
    <property type="organism name" value="human"/>
</dbReference>
<dbReference type="AGR" id="HGNC:18922"/>
<dbReference type="CTD" id="337880"/>
<dbReference type="GeneCards" id="KRTAP11-1"/>
<dbReference type="HGNC" id="HGNC:18922">
    <property type="gene designation" value="KRTAP11-1"/>
</dbReference>
<dbReference type="HPA" id="ENSG00000182591">
    <property type="expression patterns" value="Tissue enriched (skin)"/>
</dbReference>
<dbReference type="MIM" id="600064">
    <property type="type" value="gene"/>
</dbReference>
<dbReference type="neXtProt" id="NX_Q8IUC1"/>
<dbReference type="OpenTargets" id="ENSG00000182591"/>
<dbReference type="PharmGKB" id="PA134907329"/>
<dbReference type="VEuPathDB" id="HostDB:ENSG00000182591"/>
<dbReference type="eggNOG" id="ENOG502SSBU">
    <property type="taxonomic scope" value="Eukaryota"/>
</dbReference>
<dbReference type="GeneTree" id="ENSGT00730000111463"/>
<dbReference type="HOGENOM" id="CLU_1906002_0_0_1"/>
<dbReference type="InParanoid" id="Q8IUC1"/>
<dbReference type="OMA" id="CQPVGGI"/>
<dbReference type="OrthoDB" id="9444590at2759"/>
<dbReference type="PAN-GO" id="Q8IUC1">
    <property type="GO annotations" value="0 GO annotations based on evolutionary models"/>
</dbReference>
<dbReference type="PhylomeDB" id="Q8IUC1"/>
<dbReference type="TreeFam" id="TF337331"/>
<dbReference type="PathwayCommons" id="Q8IUC1"/>
<dbReference type="Reactome" id="R-HSA-6805567">
    <property type="pathway name" value="Keratinization"/>
</dbReference>
<dbReference type="SignaLink" id="Q8IUC1"/>
<dbReference type="BioGRID-ORCS" id="337880">
    <property type="hits" value="8 hits in 1136 CRISPR screens"/>
</dbReference>
<dbReference type="GenomeRNAi" id="337880"/>
<dbReference type="Pharos" id="Q8IUC1">
    <property type="development level" value="Tbio"/>
</dbReference>
<dbReference type="PRO" id="PR:Q8IUC1"/>
<dbReference type="Proteomes" id="UP000005640">
    <property type="component" value="Chromosome 21"/>
</dbReference>
<dbReference type="RNAct" id="Q8IUC1">
    <property type="molecule type" value="protein"/>
</dbReference>
<dbReference type="Bgee" id="ENSG00000182591">
    <property type="expression patterns" value="Expressed in male germ line stem cell (sensu Vertebrata) in testis and 82 other cell types or tissues"/>
</dbReference>
<dbReference type="GO" id="GO:0005829">
    <property type="term" value="C:cytosol"/>
    <property type="evidence" value="ECO:0000304"/>
    <property type="project" value="Reactome"/>
</dbReference>
<dbReference type="GO" id="GO:0045095">
    <property type="term" value="C:keratin filament"/>
    <property type="evidence" value="ECO:0007669"/>
    <property type="project" value="InterPro"/>
</dbReference>
<dbReference type="GO" id="GO:0005198">
    <property type="term" value="F:structural molecule activity"/>
    <property type="evidence" value="ECO:0007669"/>
    <property type="project" value="InterPro"/>
</dbReference>
<dbReference type="InterPro" id="IPR007659">
    <property type="entry name" value="Keratin_matx"/>
</dbReference>
<dbReference type="InterPro" id="IPR007951">
    <property type="entry name" value="KRTAP_PMG"/>
</dbReference>
<dbReference type="PANTHER" id="PTHR23260">
    <property type="entry name" value="KERATIN ASSOCIATED PROTEIN 3-3-RELATED"/>
    <property type="match status" value="1"/>
</dbReference>
<dbReference type="PANTHER" id="PTHR23260:SF9">
    <property type="entry name" value="KERATIN-ASSOCIATED PROTEIN 11-1"/>
    <property type="match status" value="1"/>
</dbReference>
<dbReference type="Pfam" id="PF05287">
    <property type="entry name" value="PMG"/>
    <property type="match status" value="1"/>
</dbReference>
<evidence type="ECO:0000305" key="1"/>
<organism>
    <name type="scientific">Homo sapiens</name>
    <name type="common">Human</name>
    <dbReference type="NCBI Taxonomy" id="9606"/>
    <lineage>
        <taxon>Eukaryota</taxon>
        <taxon>Metazoa</taxon>
        <taxon>Chordata</taxon>
        <taxon>Craniata</taxon>
        <taxon>Vertebrata</taxon>
        <taxon>Euteleostomi</taxon>
        <taxon>Mammalia</taxon>
        <taxon>Eutheria</taxon>
        <taxon>Euarchontoglires</taxon>
        <taxon>Primates</taxon>
        <taxon>Haplorrhini</taxon>
        <taxon>Catarrhini</taxon>
        <taxon>Hominidae</taxon>
        <taxon>Homo</taxon>
    </lineage>
</organism>
<gene>
    <name type="primary">KRTAP11-1</name>
    <name type="synonym">KAP11.1</name>
    <name type="synonym">KRTAP11.1</name>
</gene>
<protein>
    <recommendedName>
        <fullName>Keratin-associated protein 11-1</fullName>
    </recommendedName>
    <alternativeName>
        <fullName>High sulfur keratin-associated protein 11.1</fullName>
    </alternativeName>
</protein>
<comment type="function">
    <text>In the hair cortex, hair keratin intermediate filaments are embedded in an interfilamentous matrix, consisting of hair keratin-associated proteins (KRTAP), which are essential for the formation of a rigid and resistant hair shaft through their extensive disulfide bond cross-linking with abundant cysteine residues of hair keratins. The matrix proteins include the high-sulfur and high-glycine-tyrosine keratins.</text>
</comment>
<comment type="interaction">
    <interactant intactId="EBI-1052037">
        <id>Q8IUC1</id>
    </interactant>
    <interactant intactId="EBI-3925742">
        <id>Q8TD06</id>
        <label>AGR3</label>
    </interactant>
    <organismsDiffer>false</organismsDiffer>
    <experiments>3</experiments>
</comment>
<comment type="interaction">
    <interactant intactId="EBI-1052037">
        <id>Q8IUC1</id>
    </interactant>
    <interactant intactId="EBI-12224467">
        <id>Q9NYG5-2</id>
        <label>ANAPC11</label>
    </interactant>
    <organismsDiffer>false</organismsDiffer>
    <experiments>3</experiments>
</comment>
<comment type="interaction">
    <interactant intactId="EBI-1052037">
        <id>Q8IUC1</id>
    </interactant>
    <interactant intactId="EBI-11954519">
        <id>Q49AR9</id>
        <label>ANKS1A</label>
    </interactant>
    <organismsDiffer>false</organismsDiffer>
    <experiments>3</experiments>
</comment>
<comment type="interaction">
    <interactant intactId="EBI-1052037">
        <id>Q8IUC1</id>
    </interactant>
    <interactant intactId="EBI-12015080">
        <id>Q8WXK3-2</id>
        <label>ASB13</label>
    </interactant>
    <organismsDiffer>false</organismsDiffer>
    <experiments>3</experiments>
</comment>
<comment type="interaction">
    <interactant intactId="EBI-1052037">
        <id>Q8IUC1</id>
    </interactant>
    <interactant intactId="EBI-12006308">
        <id>Q7Z3C6-3</id>
        <label>ATG9A</label>
    </interactant>
    <organismsDiffer>false</organismsDiffer>
    <experiments>3</experiments>
</comment>
<comment type="interaction">
    <interactant intactId="EBI-1052037">
        <id>Q8IUC1</id>
    </interactant>
    <interactant intactId="EBI-8624731">
        <id>P0C7T5</id>
        <label>ATXN1L</label>
    </interactant>
    <organismsDiffer>false</organismsDiffer>
    <experiments>3</experiments>
</comment>
<comment type="interaction">
    <interactant intactId="EBI-1052037">
        <id>Q8IUC1</id>
    </interactant>
    <interactant intactId="EBI-745073">
        <id>Q9BXY8</id>
        <label>BEX2</label>
    </interactant>
    <organismsDiffer>false</organismsDiffer>
    <experiments>3</experiments>
</comment>
<comment type="interaction">
    <interactant intactId="EBI-1052037">
        <id>Q8IUC1</id>
    </interactant>
    <interactant intactId="EBI-10274247">
        <id>Q8TCT0</id>
        <label>CERK</label>
    </interactant>
    <organismsDiffer>false</organismsDiffer>
    <experiments>3</experiments>
</comment>
<comment type="interaction">
    <interactant intactId="EBI-1052037">
        <id>Q8IUC1</id>
    </interactant>
    <interactant intactId="EBI-9038570">
        <id>P27918</id>
        <label>CFP</label>
    </interactant>
    <organismsDiffer>false</organismsDiffer>
    <experiments>3</experiments>
</comment>
<comment type="interaction">
    <interactant intactId="EBI-1052037">
        <id>Q8IUC1</id>
    </interactant>
    <interactant intactId="EBI-2555370">
        <id>Q8IWX8</id>
        <label>CHERP</label>
    </interactant>
    <organismsDiffer>false</organismsDiffer>
    <experiments>3</experiments>
</comment>
<comment type="interaction">
    <interactant intactId="EBI-1052037">
        <id>Q8IUC1</id>
    </interactant>
    <interactant intactId="EBI-7043337">
        <id>P05813</id>
        <label>CRYBA1</label>
    </interactant>
    <organismsDiffer>false</organismsDiffer>
    <experiments>3</experiments>
</comment>
<comment type="interaction">
    <interactant intactId="EBI-1052037">
        <id>Q8IUC1</id>
    </interactant>
    <interactant intactId="EBI-750444">
        <id>P53672</id>
        <label>CRYBA2</label>
    </interactant>
    <organismsDiffer>false</organismsDiffer>
    <experiments>3</experiments>
</comment>
<comment type="interaction">
    <interactant intactId="EBI-1052037">
        <id>Q8IUC1</id>
    </interactant>
    <interactant intactId="EBI-12842046">
        <id>A8MUP2</id>
        <label>CSKMT</label>
    </interactant>
    <organismsDiffer>false</organismsDiffer>
    <experiments>3</experiments>
</comment>
<comment type="interaction">
    <interactant intactId="EBI-1052037">
        <id>Q8IUC1</id>
    </interactant>
    <interactant intactId="EBI-3867333">
        <id>A8MQ03</id>
        <label>CYSRT1</label>
    </interactant>
    <organismsDiffer>false</organismsDiffer>
    <experiments>3</experiments>
</comment>
<comment type="interaction">
    <interactant intactId="EBI-1052037">
        <id>Q8IUC1</id>
    </interactant>
    <interactant intactId="EBI-746300">
        <id>Q96LJ7</id>
        <label>DHRS1</label>
    </interactant>
    <organismsDiffer>false</organismsDiffer>
    <experiments>3</experiments>
</comment>
<comment type="interaction">
    <interactant intactId="EBI-1052037">
        <id>Q8IUC1</id>
    </interactant>
    <interactant intactId="EBI-740376">
        <id>Q86UW9</id>
        <label>DTX2</label>
    </interactant>
    <organismsDiffer>false</organismsDiffer>
    <experiments>3</experiments>
</comment>
<comment type="interaction">
    <interactant intactId="EBI-1052037">
        <id>Q8IUC1</id>
    </interactant>
    <interactant intactId="EBI-7357329">
        <id>Q9H596</id>
        <label>DUSP21</label>
    </interactant>
    <organismsDiffer>false</organismsDiffer>
    <experiments>3</experiments>
</comment>
<comment type="interaction">
    <interactant intactId="EBI-1052037">
        <id>Q8IUC1</id>
    </interactant>
    <interactant intactId="EBI-743414">
        <id>O95967</id>
        <label>EFEMP2</label>
    </interactant>
    <organismsDiffer>false</organismsDiffer>
    <experiments>3</experiments>
</comment>
<comment type="interaction">
    <interactant intactId="EBI-1052037">
        <id>Q8IUC1</id>
    </interactant>
    <interactant intactId="EBI-744099">
        <id>Q9H0I2</id>
        <label>ENKD1</label>
    </interactant>
    <organismsDiffer>false</organismsDiffer>
    <experiments>3</experiments>
</comment>
<comment type="interaction">
    <interactant intactId="EBI-1052037">
        <id>Q8IUC1</id>
    </interactant>
    <interactant intactId="EBI-2870454">
        <id>Q16134</id>
        <label>ETFDH</label>
    </interactant>
    <organismsDiffer>false</organismsDiffer>
    <experiments>3</experiments>
</comment>
<comment type="interaction">
    <interactant intactId="EBI-1052037">
        <id>Q8IUC1</id>
    </interactant>
    <interactant intactId="EBI-2807642">
        <id>Q8WU58</id>
        <label>FAM222B</label>
    </interactant>
    <organismsDiffer>false</organismsDiffer>
    <experiments>3</experiments>
</comment>
<comment type="interaction">
    <interactant intactId="EBI-1052037">
        <id>Q8IUC1</id>
    </interactant>
    <interactant intactId="EBI-2339898">
        <id>Q9NW38</id>
        <label>FANCL</label>
    </interactant>
    <organismsDiffer>false</organismsDiffer>
    <experiments>3</experiments>
</comment>
<comment type="interaction">
    <interactant intactId="EBI-1052037">
        <id>Q8IUC1</id>
    </interactant>
    <interactant intactId="EBI-495538">
        <id>P48023</id>
        <label>FASLG</label>
    </interactant>
    <organismsDiffer>false</organismsDiffer>
    <experiments>3</experiments>
</comment>
<comment type="interaction">
    <interactant intactId="EBI-1052037">
        <id>Q8IUC1</id>
    </interactant>
    <interactant intactId="EBI-11956479">
        <id>P23142-4</id>
        <label>FBLN1</label>
    </interactant>
    <organismsDiffer>false</organismsDiffer>
    <experiments>3</experiments>
</comment>
<comment type="interaction">
    <interactant intactId="EBI-1052037">
        <id>Q8IUC1</id>
    </interactant>
    <interactant intactId="EBI-10242151">
        <id>Q53EP0-3</id>
        <label>FNDC3B</label>
    </interactant>
    <organismsDiffer>false</organismsDiffer>
    <experiments>3</experiments>
</comment>
<comment type="interaction">
    <interactant intactId="EBI-1052037">
        <id>Q8IUC1</id>
    </interactant>
    <interactant intactId="EBI-1759806">
        <id>O75593</id>
        <label>FOXH1</label>
    </interactant>
    <organismsDiffer>false</organismsDiffer>
    <experiments>3</experiments>
</comment>
<comment type="interaction">
    <interactant intactId="EBI-1052037">
        <id>Q8IUC1</id>
    </interactant>
    <interactant intactId="EBI-725515">
        <id>O43559</id>
        <label>FRS3</label>
    </interactant>
    <organismsDiffer>false</organismsDiffer>
    <experiments>3</experiments>
</comment>
<comment type="interaction">
    <interactant intactId="EBI-1052037">
        <id>Q8IUC1</id>
    </interactant>
    <interactant intactId="EBI-2806671">
        <id>P23769</id>
        <label>GATA2</label>
    </interactant>
    <organismsDiffer>false</organismsDiffer>
    <experiments>3</experiments>
</comment>
<comment type="interaction">
    <interactant intactId="EBI-1052037">
        <id>Q8IUC1</id>
    </interactant>
    <interactant intactId="EBI-11975289">
        <id>Q9Y223-2</id>
        <label>GNE</label>
    </interactant>
    <organismsDiffer>false</organismsDiffer>
    <experiments>3</experiments>
</comment>
<comment type="interaction">
    <interactant intactId="EBI-1052037">
        <id>Q8IUC1</id>
    </interactant>
    <interactant intactId="EBI-713355">
        <id>Q13227</id>
        <label>GPS2</label>
    </interactant>
    <organismsDiffer>false</organismsDiffer>
    <experiments>3</experiments>
</comment>
<comment type="interaction">
    <interactant intactId="EBI-1052037">
        <id>Q8IUC1</id>
    </interactant>
    <interactant intactId="EBI-347538">
        <id>Q9Y4H4</id>
        <label>GPSM3</label>
    </interactant>
    <organismsDiffer>false</organismsDiffer>
    <experiments>3</experiments>
</comment>
<comment type="interaction">
    <interactant intactId="EBI-1052037">
        <id>Q8IUC1</id>
    </interactant>
    <interactant intactId="EBI-747754">
        <id>P28799</id>
        <label>GRN</label>
    </interactant>
    <organismsDiffer>false</organismsDiffer>
    <experiments>3</experiments>
</comment>
<comment type="interaction">
    <interactant intactId="EBI-1052037">
        <id>Q8IUC1</id>
    </interactant>
    <interactant intactId="EBI-750630">
        <id>Q9UBP5</id>
        <label>HEY2</label>
    </interactant>
    <organismsDiffer>false</organismsDiffer>
    <experiments>3</experiments>
</comment>
<comment type="interaction">
    <interactant intactId="EBI-1052037">
        <id>Q8IUC1</id>
    </interactant>
    <interactant intactId="EBI-740785">
        <id>P49639</id>
        <label>HOXA1</label>
    </interactant>
    <organismsDiffer>false</organismsDiffer>
    <experiments>5</experiments>
</comment>
<comment type="interaction">
    <interactant intactId="EBI-1052037">
        <id>Q8IUC1</id>
    </interactant>
    <interactant intactId="EBI-1752118">
        <id>P31273</id>
        <label>HOXC8</label>
    </interactant>
    <organismsDiffer>false</organismsDiffer>
    <experiments>3</experiments>
</comment>
<comment type="interaction">
    <interactant intactId="EBI-1052037">
        <id>Q8IUC1</id>
    </interactant>
    <interactant intactId="EBI-2880706">
        <id>O43593</id>
        <label>HR</label>
    </interactant>
    <organismsDiffer>false</organismsDiffer>
    <experiments>3</experiments>
</comment>
<comment type="interaction">
    <interactant intactId="EBI-1052037">
        <id>Q8IUC1</id>
    </interactant>
    <interactant intactId="EBI-466029">
        <id>P42858</id>
        <label>HTT</label>
    </interactant>
    <organismsDiffer>false</organismsDiffer>
    <experiments>3</experiments>
</comment>
<comment type="interaction">
    <interactant intactId="EBI-1052037">
        <id>Q8IUC1</id>
    </interactant>
    <interactant intactId="EBI-6426443">
        <id>Q2WGJ6</id>
        <label>KLHL38</label>
    </interactant>
    <organismsDiffer>false</organismsDiffer>
    <experiments>3</experiments>
</comment>
<comment type="interaction">
    <interactant intactId="EBI-1052037">
        <id>Q8IUC1</id>
    </interactant>
    <interactant intactId="EBI-10221390">
        <id>P78385</id>
        <label>KRT83</label>
    </interactant>
    <organismsDiffer>false</organismsDiffer>
    <experiments>3</experiments>
</comment>
<comment type="interaction">
    <interactant intactId="EBI-1052037">
        <id>Q8IUC1</id>
    </interactant>
    <interactant intactId="EBI-10172150">
        <id>P60370</id>
        <label>KRTAP10-5</label>
    </interactant>
    <organismsDiffer>false</organismsDiffer>
    <experiments>3</experiments>
</comment>
<comment type="interaction">
    <interactant intactId="EBI-1052037">
        <id>Q8IUC1</id>
    </interactant>
    <interactant intactId="EBI-10171774">
        <id>P60410</id>
        <label>KRTAP10-8</label>
    </interactant>
    <organismsDiffer>false</organismsDiffer>
    <experiments>3</experiments>
</comment>
<comment type="interaction">
    <interactant intactId="EBI-1052037">
        <id>Q8IUC1</id>
    </interactant>
    <interactant intactId="EBI-10210845">
        <id>P59990</id>
        <label>KRTAP12-1</label>
    </interactant>
    <organismsDiffer>false</organismsDiffer>
    <experiments>3</experiments>
</comment>
<comment type="interaction">
    <interactant intactId="EBI-1052037">
        <id>Q8IUC1</id>
    </interactant>
    <interactant intactId="EBI-11953334">
        <id>P60328</id>
        <label>KRTAP12-3</label>
    </interactant>
    <organismsDiffer>false</organismsDiffer>
    <experiments>3</experiments>
</comment>
<comment type="interaction">
    <interactant intactId="EBI-1052037">
        <id>Q8IUC1</id>
    </interactant>
    <interactant intactId="EBI-10176396">
        <id>P60329</id>
        <label>KRTAP12-4</label>
    </interactant>
    <organismsDiffer>false</organismsDiffer>
    <experiments>4</experiments>
</comment>
<comment type="interaction">
    <interactant intactId="EBI-1052037">
        <id>Q8IUC1</id>
    </interactant>
    <interactant intactId="EBI-11953846">
        <id>Q52LG2</id>
        <label>KRTAP13-2</label>
    </interactant>
    <organismsDiffer>false</organismsDiffer>
    <experiments>3</experiments>
</comment>
<comment type="interaction">
    <interactant intactId="EBI-1052037">
        <id>Q8IUC1</id>
    </interactant>
    <interactant intactId="EBI-11992140">
        <id>Q3LI76</id>
        <label>KRTAP15-1</label>
    </interactant>
    <organismsDiffer>false</organismsDiffer>
    <experiments>3</experiments>
</comment>
<comment type="interaction">
    <interactant intactId="EBI-1052037">
        <id>Q8IUC1</id>
    </interactant>
    <interactant intactId="EBI-3957672">
        <id>Q6PEX3</id>
        <label>KRTAP26-1</label>
    </interactant>
    <organismsDiffer>false</organismsDiffer>
    <experiments>3</experiments>
</comment>
<comment type="interaction">
    <interactant intactId="EBI-1052037">
        <id>Q8IUC1</id>
    </interactant>
    <interactant intactId="EBI-10302392">
        <id>Q9BYQ6</id>
        <label>KRTAP4-11</label>
    </interactant>
    <organismsDiffer>false</organismsDiffer>
    <experiments>3</experiments>
</comment>
<comment type="interaction">
    <interactant intactId="EBI-1052037">
        <id>Q8IUC1</id>
    </interactant>
    <interactant intactId="EBI-10172511">
        <id>Q9BYR5</id>
        <label>KRTAP4-2</label>
    </interactant>
    <organismsDiffer>false</organismsDiffer>
    <experiments>3</experiments>
</comment>
<comment type="interaction">
    <interactant intactId="EBI-1052037">
        <id>Q8IUC1</id>
    </interactant>
    <interactant intactId="EBI-11993296">
        <id>Q6L8G4</id>
        <label>KRTAP5-11</label>
    </interactant>
    <organismsDiffer>false</organismsDiffer>
    <experiments>3</experiments>
</comment>
<comment type="interaction">
    <interactant intactId="EBI-1052037">
        <id>Q8IUC1</id>
    </interactant>
    <interactant intactId="EBI-11974251">
        <id>Q6L8H2</id>
        <label>KRTAP5-3</label>
    </interactant>
    <organismsDiffer>false</organismsDiffer>
    <experiments>3</experiments>
</comment>
<comment type="interaction">
    <interactant intactId="EBI-1052037">
        <id>Q8IUC1</id>
    </interactant>
    <interactant intactId="EBI-11963072">
        <id>Q6L8H1</id>
        <label>KRTAP5-4</label>
    </interactant>
    <organismsDiffer>false</organismsDiffer>
    <experiments>3</experiments>
</comment>
<comment type="interaction">
    <interactant intactId="EBI-1052037">
        <id>Q8IUC1</id>
    </interactant>
    <interactant intactId="EBI-10250562">
        <id>Q6L8G9</id>
        <label>KRTAP5-6</label>
    </interactant>
    <organismsDiffer>false</organismsDiffer>
    <experiments>3</experiments>
</comment>
<comment type="interaction">
    <interactant intactId="EBI-1052037">
        <id>Q8IUC1</id>
    </interactant>
    <interactant intactId="EBI-3958099">
        <id>P26371</id>
        <label>KRTAP5-9</label>
    </interactant>
    <organismsDiffer>false</organismsDiffer>
    <experiments>4</experiments>
</comment>
<comment type="interaction">
    <interactant intactId="EBI-1052037">
        <id>Q8IUC1</id>
    </interactant>
    <interactant intactId="EBI-12111050">
        <id>Q3LI64</id>
        <label>KRTAP6-1</label>
    </interactant>
    <organismsDiffer>false</organismsDiffer>
    <experiments>3</experiments>
</comment>
<comment type="interaction">
    <interactant intactId="EBI-1052037">
        <id>Q8IUC1</id>
    </interactant>
    <interactant intactId="EBI-11962084">
        <id>Q3LI66</id>
        <label>KRTAP6-2</label>
    </interactant>
    <organismsDiffer>false</organismsDiffer>
    <experiments>3</experiments>
</comment>
<comment type="interaction">
    <interactant intactId="EBI-1052037">
        <id>Q8IUC1</id>
    </interactant>
    <interactant intactId="EBI-22311199">
        <id>Q3LI67</id>
        <label>KRTAP6-3</label>
    </interactant>
    <organismsDiffer>false</organismsDiffer>
    <experiments>3</experiments>
</comment>
<comment type="interaction">
    <interactant intactId="EBI-1052037">
        <id>Q8IUC1</id>
    </interactant>
    <interactant intactId="EBI-1044640">
        <id>Q9BYQ4</id>
        <label>KRTAP9-2</label>
    </interactant>
    <organismsDiffer>false</organismsDiffer>
    <experiments>3</experiments>
</comment>
<comment type="interaction">
    <interactant intactId="EBI-1052037">
        <id>Q8IUC1</id>
    </interactant>
    <interactant intactId="EBI-1043191">
        <id>Q9BYQ3</id>
        <label>KRTAP9-3</label>
    </interactant>
    <organismsDiffer>false</organismsDiffer>
    <experiments>3</experiments>
</comment>
<comment type="interaction">
    <interactant intactId="EBI-1052037">
        <id>Q8IUC1</id>
    </interactant>
    <interactant intactId="EBI-11958364">
        <id>Q9BYQ0</id>
        <label>KRTAP9-8</label>
    </interactant>
    <organismsDiffer>false</organismsDiffer>
    <experiments>3</experiments>
</comment>
<comment type="interaction">
    <interactant intactId="EBI-1052037">
        <id>Q8IUC1</id>
    </interactant>
    <interactant intactId="EBI-11962058">
        <id>Q5T7P2</id>
        <label>LCE1A</label>
    </interactant>
    <organismsDiffer>false</organismsDiffer>
    <experiments>3</experiments>
</comment>
<comment type="interaction">
    <interactant intactId="EBI-1052037">
        <id>Q8IUC1</id>
    </interactant>
    <interactant intactId="EBI-10245913">
        <id>Q5T7P3</id>
        <label>LCE1B</label>
    </interactant>
    <organismsDiffer>false</organismsDiffer>
    <experiments>3</experiments>
</comment>
<comment type="interaction">
    <interactant intactId="EBI-1052037">
        <id>Q8IUC1</id>
    </interactant>
    <interactant intactId="EBI-11958008">
        <id>Q5T754</id>
        <label>LCE1F</label>
    </interactant>
    <organismsDiffer>false</organismsDiffer>
    <experiments>3</experiments>
</comment>
<comment type="interaction">
    <interactant intactId="EBI-1052037">
        <id>Q8IUC1</id>
    </interactant>
    <interactant intactId="EBI-10246607">
        <id>Q5TA79</id>
        <label>LCE2A</label>
    </interactant>
    <organismsDiffer>false</organismsDiffer>
    <experiments>3</experiments>
</comment>
<comment type="interaction">
    <interactant intactId="EBI-1052037">
        <id>Q8IUC1</id>
    </interactant>
    <interactant intactId="EBI-9394625">
        <id>Q5TA76</id>
        <label>LCE3A</label>
    </interactant>
    <organismsDiffer>false</organismsDiffer>
    <experiments>3</experiments>
</comment>
<comment type="interaction">
    <interactant intactId="EBI-1052037">
        <id>Q8IUC1</id>
    </interactant>
    <interactant intactId="EBI-10245291">
        <id>Q5T5A8</id>
        <label>LCE3C</label>
    </interactant>
    <organismsDiffer>false</organismsDiffer>
    <experiments>3</experiments>
</comment>
<comment type="interaction">
    <interactant intactId="EBI-1052037">
        <id>Q8IUC1</id>
    </interactant>
    <interactant intactId="EBI-720805">
        <id>P56470</id>
        <label>LGALS4</label>
    </interactant>
    <organismsDiffer>false</organismsDiffer>
    <experiments>3</experiments>
</comment>
<comment type="interaction">
    <interactant intactId="EBI-1052037">
        <id>Q8IUC1</id>
    </interactant>
    <interactant intactId="EBI-10196832">
        <id>P0CW20</id>
        <label>LIMS4</label>
    </interactant>
    <organismsDiffer>false</organismsDiffer>
    <experiments>3</experiments>
</comment>
<comment type="interaction">
    <interactant intactId="EBI-1052037">
        <id>Q8IUC1</id>
    </interactant>
    <interactant intactId="EBI-2798728">
        <id>P61968</id>
        <label>LMO4</label>
    </interactant>
    <organismsDiffer>false</organismsDiffer>
    <experiments>3</experiments>
</comment>
<comment type="interaction">
    <interactant intactId="EBI-1052037">
        <id>Q8IUC1</id>
    </interactant>
    <interactant intactId="EBI-8025850">
        <id>O14770-4</id>
        <label>MEIS2</label>
    </interactant>
    <organismsDiffer>false</organismsDiffer>
    <experiments>3</experiments>
</comment>
<comment type="interaction">
    <interactant intactId="EBI-1052037">
        <id>Q8IUC1</id>
    </interactant>
    <interactant intactId="EBI-12135485">
        <id>P41271-2</id>
        <label>NBL1</label>
    </interactant>
    <organismsDiffer>false</organismsDiffer>
    <experiments>3</experiments>
</comment>
<comment type="interaction">
    <interactant intactId="EBI-1052037">
        <id>Q8IUC1</id>
    </interactant>
    <interactant intactId="EBI-1210753">
        <id>Q7Z417</id>
        <label>NUFIP2</label>
    </interactant>
    <organismsDiffer>false</organismsDiffer>
    <experiments>3</experiments>
</comment>
<comment type="interaction">
    <interactant intactId="EBI-1052037">
        <id>Q8IUC1</id>
    </interactant>
    <interactant intactId="EBI-10277776">
        <id>Q8WWZ8</id>
        <label>OIT3</label>
    </interactant>
    <organismsDiffer>false</organismsDiffer>
    <experiments>3</experiments>
</comment>
<comment type="interaction">
    <interactant intactId="EBI-1052037">
        <id>Q8IUC1</id>
    </interactant>
    <interactant intactId="EBI-10225049">
        <id>Q7RTU3</id>
        <label>OLIG3</label>
    </interactant>
    <organismsDiffer>false</organismsDiffer>
    <experiments>3</experiments>
</comment>
<comment type="interaction">
    <interactant intactId="EBI-1052037">
        <id>Q8IUC1</id>
    </interactant>
    <interactant intactId="EBI-13329281">
        <id>O14581</id>
        <label>OR7A17</label>
    </interactant>
    <organismsDiffer>false</organismsDiffer>
    <experiments>3</experiments>
</comment>
<comment type="interaction">
    <interactant intactId="EBI-1052037">
        <id>Q8IUC1</id>
    </interactant>
    <interactant intactId="EBI-740446">
        <id>P32242</id>
        <label>OTX1</label>
    </interactant>
    <organismsDiffer>false</organismsDiffer>
    <experiments>5</experiments>
</comment>
<comment type="interaction">
    <interactant intactId="EBI-1052037">
        <id>Q8IUC1</id>
    </interactant>
    <interactant intactId="EBI-11956269">
        <id>Q92824-2</id>
        <label>PCSK5</label>
    </interactant>
    <organismsDiffer>false</organismsDiffer>
    <experiments>3</experiments>
</comment>
<comment type="interaction">
    <interactant intactId="EBI-1052037">
        <id>Q8IUC1</id>
    </interactant>
    <interactant intactId="EBI-726466">
        <id>O15496</id>
        <label>PLA2G10</label>
    </interactant>
    <organismsDiffer>false</organismsDiffer>
    <experiments>3</experiments>
</comment>
<comment type="interaction">
    <interactant intactId="EBI-1052037">
        <id>Q8IUC1</id>
    </interactant>
    <interactant intactId="EBI-750734">
        <id>Q9NRY6</id>
        <label>PLSCR3</label>
    </interactant>
    <organismsDiffer>false</organismsDiffer>
    <experiments>3</experiments>
</comment>
<comment type="interaction">
    <interactant intactId="EBI-1052037">
        <id>Q8IUC1</id>
    </interactant>
    <interactant intactId="EBI-740343">
        <id>Q93062-3</id>
        <label>RBPMS</label>
    </interactant>
    <organismsDiffer>false</organismsDiffer>
    <experiments>3</experiments>
</comment>
<comment type="interaction">
    <interactant intactId="EBI-1052037">
        <id>Q8IUC1</id>
    </interactant>
    <interactant intactId="EBI-11987469">
        <id>Q6ZRY4</id>
        <label>RBPMS2</label>
    </interactant>
    <organismsDiffer>false</organismsDiffer>
    <experiments>3</experiments>
</comment>
<comment type="interaction">
    <interactant intactId="EBI-1052037">
        <id>Q8IUC1</id>
    </interactant>
    <interactant intactId="EBI-2341200">
        <id>Q9H0F5</id>
        <label>RNF38</label>
    </interactant>
    <organismsDiffer>false</organismsDiffer>
    <experiments>3</experiments>
</comment>
<comment type="interaction">
    <interactant intactId="EBI-1052037">
        <id>Q8IUC1</id>
    </interactant>
    <interactant intactId="EBI-12002412">
        <id>Q86YT5</id>
        <label>SLC13A5</label>
    </interactant>
    <organismsDiffer>false</organismsDiffer>
    <experiments>3</experiments>
</comment>
<comment type="interaction">
    <interactant intactId="EBI-1052037">
        <id>Q8IUC1</id>
    </interactant>
    <interactant intactId="EBI-766589">
        <id>P09234</id>
        <label>SNRPC</label>
    </interactant>
    <organismsDiffer>false</organismsDiffer>
    <experiments>3</experiments>
</comment>
<comment type="interaction">
    <interactant intactId="EBI-1052037">
        <id>Q8IUC1</id>
    </interactant>
    <interactant intactId="EBI-11959123">
        <id>Q99932-2</id>
        <label>SPAG8</label>
    </interactant>
    <organismsDiffer>false</organismsDiffer>
    <experiments>3</experiments>
</comment>
<comment type="interaction">
    <interactant intactId="EBI-1052037">
        <id>Q8IUC1</id>
    </interactant>
    <interactant intactId="EBI-3866665">
        <id>O43609</id>
        <label>SPRY1</label>
    </interactant>
    <organismsDiffer>false</organismsDiffer>
    <experiments>3</experiments>
</comment>
<comment type="interaction">
    <interactant intactId="EBI-1052037">
        <id>Q8IUC1</id>
    </interactant>
    <interactant intactId="EBI-749295">
        <id>O75716</id>
        <label>STK16</label>
    </interactant>
    <organismsDiffer>false</organismsDiffer>
    <experiments>3</experiments>
</comment>
<comment type="interaction">
    <interactant intactId="EBI-1052037">
        <id>Q8IUC1</id>
    </interactant>
    <interactant intactId="EBI-2824328">
        <id>O95947</id>
        <label>TBX6</label>
    </interactant>
    <organismsDiffer>false</organismsDiffer>
    <experiments>3</experiments>
</comment>
<comment type="interaction">
    <interactant intactId="EBI-1052037">
        <id>Q8IUC1</id>
    </interactant>
    <interactant intactId="EBI-750487">
        <id>Q8WW24</id>
        <label>TEKT4</label>
    </interactant>
    <organismsDiffer>false</organismsDiffer>
    <experiments>3</experiments>
</comment>
<comment type="interaction">
    <interactant intactId="EBI-1052037">
        <id>Q8IUC1</id>
    </interactant>
    <interactant intactId="EBI-744726">
        <id>Q8NEK8</id>
        <label>TENT5D</label>
    </interactant>
    <organismsDiffer>false</organismsDiffer>
    <experiments>3</experiments>
</comment>
<comment type="interaction">
    <interactant intactId="EBI-1052037">
        <id>Q8IUC1</id>
    </interactant>
    <interactant intactId="EBI-11952651">
        <id>Q7Z6R9</id>
        <label>TFAP2D</label>
    </interactant>
    <organismsDiffer>false</organismsDiffer>
    <experiments>3</experiments>
</comment>
<comment type="interaction">
    <interactant intactId="EBI-1052037">
        <id>Q8IUC1</id>
    </interactant>
    <interactant intactId="EBI-11741437">
        <id>Q08117-2</id>
        <label>TLE5</label>
    </interactant>
    <organismsDiffer>false</organismsDiffer>
    <experiments>3</experiments>
</comment>
<comment type="interaction">
    <interactant intactId="EBI-1052037">
        <id>Q8IUC1</id>
    </interactant>
    <interactant intactId="EBI-3939165">
        <id>O43711</id>
        <label>TLX3</label>
    </interactant>
    <organismsDiffer>false</organismsDiffer>
    <experiments>3</experiments>
</comment>
<comment type="interaction">
    <interactant intactId="EBI-1052037">
        <id>Q8IUC1</id>
    </interactant>
    <interactant intactId="EBI-949753">
        <id>Q63HR2</id>
        <label>TNS2</label>
    </interactant>
    <organismsDiffer>false</organismsDiffer>
    <experiments>5</experiments>
</comment>
<comment type="interaction">
    <interactant intactId="EBI-1052037">
        <id>Q8IUC1</id>
    </interactant>
    <interactant intactId="EBI-10249550">
        <id>Q6EMK4</id>
        <label>VASN</label>
    </interactant>
    <organismsDiffer>false</organismsDiffer>
    <experiments>3</experiments>
</comment>
<comment type="interaction">
    <interactant intactId="EBI-1052037">
        <id>Q8IUC1</id>
    </interactant>
    <interactant intactId="EBI-10191303">
        <id>O95231</id>
        <label>VENTX</label>
    </interactant>
    <organismsDiffer>false</organismsDiffer>
    <experiments>3</experiments>
</comment>
<comment type="interaction">
    <interactant intactId="EBI-1052037">
        <id>Q8IUC1</id>
    </interactant>
    <interactant intactId="EBI-11957216">
        <id>A8MV65-2</id>
        <label>VGLL3</label>
    </interactant>
    <organismsDiffer>false</organismsDiffer>
    <experiments>3</experiments>
</comment>
<comment type="interaction">
    <interactant intactId="EBI-1052037">
        <id>Q8IUC1</id>
    </interactant>
    <interactant intactId="EBI-11747707">
        <id>B2RUY7</id>
        <label>VWC2L</label>
    </interactant>
    <organismsDiffer>false</organismsDiffer>
    <experiments>3</experiments>
</comment>
<comment type="interaction">
    <interactant intactId="EBI-1052037">
        <id>Q8IUC1</id>
    </interactant>
    <interactant intactId="EBI-12040603">
        <id>Q9NZC7-5</id>
        <label>WWOX</label>
    </interactant>
    <organismsDiffer>false</organismsDiffer>
    <experiments>3</experiments>
</comment>
<comment type="interaction">
    <interactant intactId="EBI-1052037">
        <id>Q8IUC1</id>
    </interactant>
    <interactant intactId="EBI-743787">
        <id>Q9GZM5</id>
        <label>YIPF3</label>
    </interactant>
    <organismsDiffer>false</organismsDiffer>
    <experiments>3</experiments>
</comment>
<comment type="interaction">
    <interactant intactId="EBI-1052037">
        <id>Q8IUC1</id>
    </interactant>
    <interactant intactId="EBI-11963196">
        <id>Q15915</id>
        <label>ZIC1</label>
    </interactant>
    <organismsDiffer>false</organismsDiffer>
    <experiments>3</experiments>
</comment>
<comment type="tissue specificity">
    <text>Expressed in the upper matrix and in the entire hair cortex.</text>
</comment>
<comment type="similarity">
    <text evidence="1">Belongs to the PMG family.</text>
</comment>